<reference evidence="5" key="1">
    <citation type="submission" date="2006-10" db="EMBL/GenBank/DDBJ databases">
        <authorList>
            <person name="Fleischmann R.D."/>
            <person name="Dodson R.J."/>
            <person name="Haft D.H."/>
            <person name="Merkel J.S."/>
            <person name="Nelson W.C."/>
            <person name="Fraser C.M."/>
        </authorList>
    </citation>
    <scope>NUCLEOTIDE SEQUENCE [LARGE SCALE GENOMIC DNA]</scope>
    <source>
        <strain>ATCC 700084 / mc(2)155</strain>
    </source>
</reference>
<reference evidence="6" key="2">
    <citation type="journal article" date="2007" name="Genome Biol.">
        <title>Interrupted coding sequences in Mycobacterium smegmatis: authentic mutations or sequencing errors?</title>
        <authorList>
            <person name="Deshayes C."/>
            <person name="Perrodou E."/>
            <person name="Gallien S."/>
            <person name="Euphrasie D."/>
            <person name="Schaeffer C."/>
            <person name="Van-Dorsselaer A."/>
            <person name="Poch O."/>
            <person name="Lecompte O."/>
            <person name="Reyrat J.-M."/>
        </authorList>
    </citation>
    <scope>NUCLEOTIDE SEQUENCE [LARGE SCALE GENOMIC DNA]</scope>
    <source>
        <strain>ATCC 700084 / mc(2)155</strain>
    </source>
</reference>
<reference evidence="6" key="3">
    <citation type="journal article" date="2009" name="Genome Res.">
        <title>Ortho-proteogenomics: multiple proteomes investigation through orthology and a new MS-based protocol.</title>
        <authorList>
            <person name="Gallien S."/>
            <person name="Perrodou E."/>
            <person name="Carapito C."/>
            <person name="Deshayes C."/>
            <person name="Reyrat J.-M."/>
            <person name="Van Dorsselaer A."/>
            <person name="Poch O."/>
            <person name="Schaeffer C."/>
            <person name="Lecompte O."/>
        </authorList>
    </citation>
    <scope>NUCLEOTIDE SEQUENCE [LARGE SCALE GENOMIC DNA]</scope>
    <source>
        <strain>ATCC 700084 / mc(2)155</strain>
    </source>
</reference>
<reference key="4">
    <citation type="journal article" date="2024" name="ACS Infect. Dis.">
        <title>Mycobacterium LacI-type Transcription Regulator Rv3575c Affects Host Innate Immunity by Regulating Bacterial mce4 Operon-Mediated Cholesterol Transport.</title>
        <authorList>
            <person name="Zhen J."/>
            <person name="Abuliken Y."/>
            <person name="Yan Y."/>
            <person name="Gao C."/>
            <person name="Jiang Z."/>
            <person name="Huang T."/>
            <person name="Le T.T.T."/>
            <person name="Xiang L."/>
            <person name="Li P."/>
            <person name="Xie J."/>
        </authorList>
    </citation>
    <scope>DISRUPTION PHENOTYPE</scope>
</reference>
<dbReference type="EMBL" id="CP000480">
    <property type="protein sequence ID" value="ABK73332.1"/>
    <property type="molecule type" value="Genomic_DNA"/>
</dbReference>
<dbReference type="EMBL" id="CP001663">
    <property type="protein sequence ID" value="AFP42316.1"/>
    <property type="status" value="ALT_INIT"/>
    <property type="molecule type" value="Genomic_DNA"/>
</dbReference>
<dbReference type="RefSeq" id="WP_011730997.1">
    <property type="nucleotide sequence ID" value="NZ_SIJM01000017.1"/>
</dbReference>
<dbReference type="RefSeq" id="YP_890268.1">
    <property type="nucleotide sequence ID" value="NC_008596.1"/>
</dbReference>
<dbReference type="STRING" id="246196.MSMEG_6044"/>
<dbReference type="PaxDb" id="246196-MSMEI_5883"/>
<dbReference type="KEGG" id="msb:LJ00_29880"/>
<dbReference type="KEGG" id="msg:MSMEI_5883"/>
<dbReference type="KEGG" id="msm:MSMEG_6044"/>
<dbReference type="PATRIC" id="fig|246196.19.peg.5880"/>
<dbReference type="eggNOG" id="COG1609">
    <property type="taxonomic scope" value="Bacteria"/>
</dbReference>
<dbReference type="OrthoDB" id="5171752at2"/>
<dbReference type="Proteomes" id="UP000000757">
    <property type="component" value="Chromosome"/>
</dbReference>
<dbReference type="Proteomes" id="UP000006158">
    <property type="component" value="Chromosome"/>
</dbReference>
<dbReference type="GO" id="GO:0008784">
    <property type="term" value="F:alanine racemase activity"/>
    <property type="evidence" value="ECO:0007669"/>
    <property type="project" value="UniProtKB-EC"/>
</dbReference>
<dbReference type="GO" id="GO:0003700">
    <property type="term" value="F:DNA-binding transcription factor activity"/>
    <property type="evidence" value="ECO:0007669"/>
    <property type="project" value="TreeGrafter"/>
</dbReference>
<dbReference type="GO" id="GO:0000976">
    <property type="term" value="F:transcription cis-regulatory region binding"/>
    <property type="evidence" value="ECO:0007669"/>
    <property type="project" value="TreeGrafter"/>
</dbReference>
<dbReference type="CDD" id="cd01392">
    <property type="entry name" value="HTH_LacI"/>
    <property type="match status" value="1"/>
</dbReference>
<dbReference type="CDD" id="cd06279">
    <property type="entry name" value="PBP1_LacI-like"/>
    <property type="match status" value="1"/>
</dbReference>
<dbReference type="Gene3D" id="3.40.50.2300">
    <property type="match status" value="2"/>
</dbReference>
<dbReference type="Gene3D" id="1.10.260.40">
    <property type="entry name" value="lambda repressor-like DNA-binding domains"/>
    <property type="match status" value="1"/>
</dbReference>
<dbReference type="InterPro" id="IPR000843">
    <property type="entry name" value="HTH_LacI"/>
</dbReference>
<dbReference type="InterPro" id="IPR046335">
    <property type="entry name" value="LacI/GalR-like_sensor"/>
</dbReference>
<dbReference type="InterPro" id="IPR010982">
    <property type="entry name" value="Lambda_DNA-bd_dom_sf"/>
</dbReference>
<dbReference type="InterPro" id="IPR028082">
    <property type="entry name" value="Peripla_BP_I"/>
</dbReference>
<dbReference type="PANTHER" id="PTHR30146">
    <property type="entry name" value="LACI-RELATED TRANSCRIPTIONAL REPRESSOR"/>
    <property type="match status" value="1"/>
</dbReference>
<dbReference type="PANTHER" id="PTHR30146:SF138">
    <property type="entry name" value="TRANSCRIPTIONAL REGULATORY PROTEIN"/>
    <property type="match status" value="1"/>
</dbReference>
<dbReference type="Pfam" id="PF13377">
    <property type="entry name" value="Peripla_BP_3"/>
    <property type="match status" value="1"/>
</dbReference>
<dbReference type="SMART" id="SM00354">
    <property type="entry name" value="HTH_LACI"/>
    <property type="match status" value="1"/>
</dbReference>
<dbReference type="SUPFAM" id="SSF47413">
    <property type="entry name" value="lambda repressor-like DNA-binding domains"/>
    <property type="match status" value="1"/>
</dbReference>
<dbReference type="SUPFAM" id="SSF53822">
    <property type="entry name" value="Periplasmic binding protein-like I"/>
    <property type="match status" value="1"/>
</dbReference>
<dbReference type="PROSITE" id="PS50932">
    <property type="entry name" value="HTH_LACI_2"/>
    <property type="match status" value="1"/>
</dbReference>
<accession>A0R530</accession>
<accession>I7GFB7</accession>
<name>R3575_MYCS2</name>
<keyword id="KW-0238">DNA-binding</keyword>
<keyword id="KW-1185">Reference proteome</keyword>
<keyword id="KW-0678">Repressor</keyword>
<keyword id="KW-0804">Transcription</keyword>
<keyword id="KW-0805">Transcription regulation</keyword>
<protein>
    <recommendedName>
        <fullName evidence="4">HTH-type transcriptional regulator MSMEG_6044/MSMEI_5883</fullName>
    </recommendedName>
</protein>
<feature type="chain" id="PRO_0000461898" description="HTH-type transcriptional regulator MSMEG_6044/MSMEI_5883">
    <location>
        <begin position="1"/>
        <end position="366"/>
    </location>
</feature>
<feature type="domain" description="HTH lacI-type" evidence="2">
    <location>
        <begin position="11"/>
        <end position="66"/>
    </location>
</feature>
<feature type="DNA-binding region" description="H-T-H motif" evidence="2">
    <location>
        <begin position="13"/>
        <end position="32"/>
    </location>
</feature>
<gene>
    <name evidence="5" type="ordered locus">MSMEG_6044</name>
    <name evidence="6" type="ordered locus">MSMEI_5883</name>
</gene>
<sequence>MPRSPHPPRRATLASLAAELKVSRTTISNAYNRPDQLSADLRERIFDAAKRLGYPGPDPVARSLRTRKAGAVGLMITEPLDYSFSDPAALDFVAGLAESCEEAGQGLLLVAVGPNRTFEEGSNSVLAAGVDGFVVYSASDDDPYLPVLQQRQLPMVVVDQPKDVPGVSRISIDDRGAMRELAEYVLELGHRDIGLLTMRLGRDWPHGDPRPALADPERVLSPHFHVQRERIHGVYDAMSAAGLDPSSLTVVESYEHLPTSGGAAAEVALEVNPRITALMCTADVLALSAMDHLRSRGIYVPGHMTVTGFDGVRDALRRGLTTVKQPSMEKGRRAGHLLHNPPGSGLPVIDVLETEVVRGRTSGPPA</sequence>
<organism>
    <name type="scientific">Mycolicibacterium smegmatis (strain ATCC 700084 / mc(2)155)</name>
    <name type="common">Mycobacterium smegmatis</name>
    <dbReference type="NCBI Taxonomy" id="246196"/>
    <lineage>
        <taxon>Bacteria</taxon>
        <taxon>Bacillati</taxon>
        <taxon>Actinomycetota</taxon>
        <taxon>Actinomycetes</taxon>
        <taxon>Mycobacteriales</taxon>
        <taxon>Mycobacteriaceae</taxon>
        <taxon>Mycolicibacterium</taxon>
    </lineage>
</organism>
<comment type="function">
    <text evidence="1">Transcriptional regulator that negatively regulates transcription of the mce4 operon, which is involved in cholesterol transport and utilization (By similarity). Acts by binding to the promoter region of the mce4 operon (By similarity).</text>
</comment>
<comment type="disruption phenotype">
    <text evidence="3">Deletion mutant has better growth ability in a cholesterol-supplemented medium compared to the wild type (PubMed:39236267). Deletion of the gene alters the composition of the cell wall, leading to its remodeling (PubMed:39236267). It enhances the hydrophobicity and permeability of the cell wall and resistance to ethambutol (PubMed:39236267). Deletion of the gene also inhibits the host innate immune response to M.smegmatis, and promotes the survival of M.smegmatis in macrophages and infected mouse lungs, leading to reduced transcription of TNF-alpha and interleukin-6 (IL-6) (PubMed:39236267).</text>
</comment>
<comment type="sequence caution" evidence="4">
    <conflict type="erroneous initiation">
        <sequence resource="EMBL-CDS" id="AFP42316"/>
    </conflict>
    <text>Truncated N-terminus.</text>
</comment>
<evidence type="ECO:0000250" key="1">
    <source>
        <dbReference type="UniProtKB" id="P96857"/>
    </source>
</evidence>
<evidence type="ECO:0000255" key="2">
    <source>
        <dbReference type="PROSITE-ProRule" id="PRU00111"/>
    </source>
</evidence>
<evidence type="ECO:0000269" key="3">
    <source>
    </source>
</evidence>
<evidence type="ECO:0000305" key="4"/>
<evidence type="ECO:0000312" key="5">
    <source>
        <dbReference type="EMBL" id="ABK73332.1"/>
    </source>
</evidence>
<evidence type="ECO:0000312" key="6">
    <source>
        <dbReference type="EMBL" id="AFP42316.1"/>
    </source>
</evidence>
<proteinExistence type="inferred from homology"/>